<feature type="chain" id="PRO_1000187808" description="Ubiquinone/menaquinone biosynthesis C-methyltransferase UbiE">
    <location>
        <begin position="1"/>
        <end position="251"/>
    </location>
</feature>
<feature type="binding site" evidence="1">
    <location>
        <position position="74"/>
    </location>
    <ligand>
        <name>S-adenosyl-L-methionine</name>
        <dbReference type="ChEBI" id="CHEBI:59789"/>
    </ligand>
</feature>
<feature type="binding site" evidence="1">
    <location>
        <position position="95"/>
    </location>
    <ligand>
        <name>S-adenosyl-L-methionine</name>
        <dbReference type="ChEBI" id="CHEBI:59789"/>
    </ligand>
</feature>
<feature type="binding site" evidence="1">
    <location>
        <begin position="123"/>
        <end position="124"/>
    </location>
    <ligand>
        <name>S-adenosyl-L-methionine</name>
        <dbReference type="ChEBI" id="CHEBI:59789"/>
    </ligand>
</feature>
<feature type="binding site" evidence="1">
    <location>
        <position position="140"/>
    </location>
    <ligand>
        <name>S-adenosyl-L-methionine</name>
        <dbReference type="ChEBI" id="CHEBI:59789"/>
    </ligand>
</feature>
<sequence length="251" mass="28136">MVEDSQETTHFGFQTVAKEQKADMVAHVFHSVASKYDVMNDLMSFGIHRLWKRFTIDCSGVRRGQTVLDLAGGTGDLTAKFSRMVGETGKVILADINDSMLKMGREKLRNIGVIGNVEYVQANAEALPFPDNTFDCITISFGLRNVTEKEKALRSMFRVLKPGGRLLVLEFSKPIIEPLSKAYDAYSFHILPRIGSMVANDADSYRYLAESIRMHPDQDTLKAMMQDAGFESVDYYNLTAGVVALHRGYKF</sequence>
<keyword id="KW-0474">Menaquinone biosynthesis</keyword>
<keyword id="KW-0489">Methyltransferase</keyword>
<keyword id="KW-0949">S-adenosyl-L-methionine</keyword>
<keyword id="KW-0808">Transferase</keyword>
<keyword id="KW-0831">Ubiquinone biosynthesis</keyword>
<organism>
    <name type="scientific">Salmonella paratyphi C (strain RKS4594)</name>
    <dbReference type="NCBI Taxonomy" id="476213"/>
    <lineage>
        <taxon>Bacteria</taxon>
        <taxon>Pseudomonadati</taxon>
        <taxon>Pseudomonadota</taxon>
        <taxon>Gammaproteobacteria</taxon>
        <taxon>Enterobacterales</taxon>
        <taxon>Enterobacteriaceae</taxon>
        <taxon>Salmonella</taxon>
    </lineage>
</organism>
<gene>
    <name evidence="1" type="primary">ubiE</name>
    <name type="ordered locus">SPC_4078</name>
</gene>
<accession>C0Q3E1</accession>
<proteinExistence type="inferred from homology"/>
<evidence type="ECO:0000255" key="1">
    <source>
        <dbReference type="HAMAP-Rule" id="MF_01813"/>
    </source>
</evidence>
<comment type="function">
    <text evidence="1">Methyltransferase required for the conversion of demethylmenaquinol (DMKH2) to menaquinol (MKH2) and the conversion of 2-polyprenyl-6-methoxy-1,4-benzoquinol (DDMQH2) to 2-polyprenyl-3-methyl-6-methoxy-1,4-benzoquinol (DMQH2).</text>
</comment>
<comment type="catalytic activity">
    <reaction evidence="1">
        <text>a 2-demethylmenaquinol + S-adenosyl-L-methionine = a menaquinol + S-adenosyl-L-homocysteine + H(+)</text>
        <dbReference type="Rhea" id="RHEA:42640"/>
        <dbReference type="Rhea" id="RHEA-COMP:9539"/>
        <dbReference type="Rhea" id="RHEA-COMP:9563"/>
        <dbReference type="ChEBI" id="CHEBI:15378"/>
        <dbReference type="ChEBI" id="CHEBI:18151"/>
        <dbReference type="ChEBI" id="CHEBI:55437"/>
        <dbReference type="ChEBI" id="CHEBI:57856"/>
        <dbReference type="ChEBI" id="CHEBI:59789"/>
        <dbReference type="EC" id="2.1.1.163"/>
    </reaction>
</comment>
<comment type="catalytic activity">
    <reaction evidence="1">
        <text>a 2-methoxy-6-(all-trans-polyprenyl)benzene-1,4-diol + S-adenosyl-L-methionine = a 5-methoxy-2-methyl-3-(all-trans-polyprenyl)benzene-1,4-diol + S-adenosyl-L-homocysteine + H(+)</text>
        <dbReference type="Rhea" id="RHEA:28286"/>
        <dbReference type="Rhea" id="RHEA-COMP:10858"/>
        <dbReference type="Rhea" id="RHEA-COMP:10859"/>
        <dbReference type="ChEBI" id="CHEBI:15378"/>
        <dbReference type="ChEBI" id="CHEBI:57856"/>
        <dbReference type="ChEBI" id="CHEBI:59789"/>
        <dbReference type="ChEBI" id="CHEBI:84166"/>
        <dbReference type="ChEBI" id="CHEBI:84167"/>
        <dbReference type="EC" id="2.1.1.201"/>
    </reaction>
</comment>
<comment type="pathway">
    <text evidence="1">Quinol/quinone metabolism; menaquinone biosynthesis; menaquinol from 1,4-dihydroxy-2-naphthoate: step 2/2.</text>
</comment>
<comment type="pathway">
    <text evidence="1">Cofactor biosynthesis; ubiquinone biosynthesis.</text>
</comment>
<comment type="similarity">
    <text evidence="1">Belongs to the class I-like SAM-binding methyltransferase superfamily. MenG/UbiE family.</text>
</comment>
<reference key="1">
    <citation type="journal article" date="2009" name="PLoS ONE">
        <title>Salmonella paratyphi C: genetic divergence from Salmonella choleraesuis and pathogenic convergence with Salmonella typhi.</title>
        <authorList>
            <person name="Liu W.-Q."/>
            <person name="Feng Y."/>
            <person name="Wang Y."/>
            <person name="Zou Q.-H."/>
            <person name="Chen F."/>
            <person name="Guo J.-T."/>
            <person name="Peng Y.-H."/>
            <person name="Jin Y."/>
            <person name="Li Y.-G."/>
            <person name="Hu S.-N."/>
            <person name="Johnston R.N."/>
            <person name="Liu G.-R."/>
            <person name="Liu S.-L."/>
        </authorList>
    </citation>
    <scope>NUCLEOTIDE SEQUENCE [LARGE SCALE GENOMIC DNA]</scope>
    <source>
        <strain>RKS4594</strain>
    </source>
</reference>
<dbReference type="EC" id="2.1.1.163" evidence="1"/>
<dbReference type="EC" id="2.1.1.201" evidence="1"/>
<dbReference type="EMBL" id="CP000857">
    <property type="protein sequence ID" value="ACN48143.1"/>
    <property type="molecule type" value="Genomic_DNA"/>
</dbReference>
<dbReference type="RefSeq" id="WP_000229009.1">
    <property type="nucleotide sequence ID" value="NC_012125.1"/>
</dbReference>
<dbReference type="SMR" id="C0Q3E1"/>
<dbReference type="KEGG" id="sei:SPC_4078"/>
<dbReference type="HOGENOM" id="CLU_037990_0_0_6"/>
<dbReference type="UniPathway" id="UPA00079">
    <property type="reaction ID" value="UER00169"/>
</dbReference>
<dbReference type="UniPathway" id="UPA00232"/>
<dbReference type="Proteomes" id="UP000001599">
    <property type="component" value="Chromosome"/>
</dbReference>
<dbReference type="GO" id="GO:0008425">
    <property type="term" value="F:2-methoxy-6-polyprenyl-1,4-benzoquinol methyltransferase activity"/>
    <property type="evidence" value="ECO:0007669"/>
    <property type="project" value="UniProtKB-UniRule"/>
</dbReference>
<dbReference type="GO" id="GO:0043770">
    <property type="term" value="F:demethylmenaquinone methyltransferase activity"/>
    <property type="evidence" value="ECO:0007669"/>
    <property type="project" value="UniProtKB-UniRule"/>
</dbReference>
<dbReference type="GO" id="GO:0009060">
    <property type="term" value="P:aerobic respiration"/>
    <property type="evidence" value="ECO:0007669"/>
    <property type="project" value="UniProtKB-UniRule"/>
</dbReference>
<dbReference type="GO" id="GO:0009234">
    <property type="term" value="P:menaquinone biosynthetic process"/>
    <property type="evidence" value="ECO:0007669"/>
    <property type="project" value="UniProtKB-UniRule"/>
</dbReference>
<dbReference type="GO" id="GO:0032259">
    <property type="term" value="P:methylation"/>
    <property type="evidence" value="ECO:0007669"/>
    <property type="project" value="UniProtKB-KW"/>
</dbReference>
<dbReference type="CDD" id="cd02440">
    <property type="entry name" value="AdoMet_MTases"/>
    <property type="match status" value="1"/>
</dbReference>
<dbReference type="FunFam" id="3.40.50.150:FF:000014">
    <property type="entry name" value="Ubiquinone/menaquinone biosynthesis C-methyltransferase UbiE"/>
    <property type="match status" value="1"/>
</dbReference>
<dbReference type="Gene3D" id="3.40.50.150">
    <property type="entry name" value="Vaccinia Virus protein VP39"/>
    <property type="match status" value="1"/>
</dbReference>
<dbReference type="HAMAP" id="MF_01813">
    <property type="entry name" value="MenG_UbiE_methyltr"/>
    <property type="match status" value="1"/>
</dbReference>
<dbReference type="InterPro" id="IPR029063">
    <property type="entry name" value="SAM-dependent_MTases_sf"/>
</dbReference>
<dbReference type="InterPro" id="IPR004033">
    <property type="entry name" value="UbiE/COQ5_MeTrFase"/>
</dbReference>
<dbReference type="InterPro" id="IPR023576">
    <property type="entry name" value="UbiE/COQ5_MeTrFase_CS"/>
</dbReference>
<dbReference type="NCBIfam" id="TIGR01934">
    <property type="entry name" value="MenG_MenH_UbiE"/>
    <property type="match status" value="1"/>
</dbReference>
<dbReference type="NCBIfam" id="NF001240">
    <property type="entry name" value="PRK00216.1-1"/>
    <property type="match status" value="1"/>
</dbReference>
<dbReference type="NCBIfam" id="NF001242">
    <property type="entry name" value="PRK00216.1-3"/>
    <property type="match status" value="1"/>
</dbReference>
<dbReference type="NCBIfam" id="NF001244">
    <property type="entry name" value="PRK00216.1-5"/>
    <property type="match status" value="1"/>
</dbReference>
<dbReference type="PANTHER" id="PTHR43591:SF24">
    <property type="entry name" value="2-METHOXY-6-POLYPRENYL-1,4-BENZOQUINOL METHYLASE, MITOCHONDRIAL"/>
    <property type="match status" value="1"/>
</dbReference>
<dbReference type="PANTHER" id="PTHR43591">
    <property type="entry name" value="METHYLTRANSFERASE"/>
    <property type="match status" value="1"/>
</dbReference>
<dbReference type="Pfam" id="PF01209">
    <property type="entry name" value="Ubie_methyltran"/>
    <property type="match status" value="1"/>
</dbReference>
<dbReference type="SUPFAM" id="SSF53335">
    <property type="entry name" value="S-adenosyl-L-methionine-dependent methyltransferases"/>
    <property type="match status" value="1"/>
</dbReference>
<dbReference type="PROSITE" id="PS51608">
    <property type="entry name" value="SAM_MT_UBIE"/>
    <property type="match status" value="1"/>
</dbReference>
<dbReference type="PROSITE" id="PS01183">
    <property type="entry name" value="UBIE_1"/>
    <property type="match status" value="1"/>
</dbReference>
<dbReference type="PROSITE" id="PS01184">
    <property type="entry name" value="UBIE_2"/>
    <property type="match status" value="1"/>
</dbReference>
<name>UBIE_SALPC</name>
<protein>
    <recommendedName>
        <fullName evidence="1">Ubiquinone/menaquinone biosynthesis C-methyltransferase UbiE</fullName>
        <ecNumber evidence="1">2.1.1.163</ecNumber>
        <ecNumber evidence="1">2.1.1.201</ecNumber>
    </recommendedName>
    <alternativeName>
        <fullName evidence="1">2-methoxy-6-polyprenyl-1,4-benzoquinol methylase</fullName>
    </alternativeName>
    <alternativeName>
        <fullName evidence="1">Demethylmenaquinone methyltransferase</fullName>
    </alternativeName>
</protein>